<name>RL7_CUPPJ</name>
<keyword id="KW-0687">Ribonucleoprotein</keyword>
<keyword id="KW-0689">Ribosomal protein</keyword>
<proteinExistence type="inferred from homology"/>
<organism>
    <name type="scientific">Cupriavidus pinatubonensis (strain JMP 134 / LMG 1197)</name>
    <name type="common">Cupriavidus necator (strain JMP 134)</name>
    <dbReference type="NCBI Taxonomy" id="264198"/>
    <lineage>
        <taxon>Bacteria</taxon>
        <taxon>Pseudomonadati</taxon>
        <taxon>Pseudomonadota</taxon>
        <taxon>Betaproteobacteria</taxon>
        <taxon>Burkholderiales</taxon>
        <taxon>Burkholderiaceae</taxon>
        <taxon>Cupriavidus</taxon>
    </lineage>
</organism>
<reference key="1">
    <citation type="journal article" date="2010" name="PLoS ONE">
        <title>The complete multipartite genome sequence of Cupriavidus necator JMP134, a versatile pollutant degrader.</title>
        <authorList>
            <person name="Lykidis A."/>
            <person name="Perez-Pantoja D."/>
            <person name="Ledger T."/>
            <person name="Mavromatis K."/>
            <person name="Anderson I.J."/>
            <person name="Ivanova N.N."/>
            <person name="Hooper S.D."/>
            <person name="Lapidus A."/>
            <person name="Lucas S."/>
            <person name="Gonzalez B."/>
            <person name="Kyrpides N.C."/>
        </authorList>
    </citation>
    <scope>NUCLEOTIDE SEQUENCE [LARGE SCALE GENOMIC DNA]</scope>
    <source>
        <strain>JMP134 / LMG 1197</strain>
    </source>
</reference>
<sequence length="124" mass="12508">MAITKDDILEAVGAMSVMELNDLVKAFEEKFGVSAAAMAVAAAPGAGGAAAAEEQTEFNVILAEVGANKVGVIKAVREITGLGLKEAKDLVDGAPKAVKEGVDKAAAAEAKKKLEDAGAKVDVK</sequence>
<gene>
    <name evidence="1" type="primary">rplL</name>
    <name type="ordered locus">Reut_A3190</name>
</gene>
<feature type="chain" id="PRO_0000243478" description="Large ribosomal subunit protein bL12">
    <location>
        <begin position="1"/>
        <end position="124"/>
    </location>
</feature>
<comment type="function">
    <text evidence="1">Forms part of the ribosomal stalk which helps the ribosome interact with GTP-bound translation factors. Is thus essential for accurate translation.</text>
</comment>
<comment type="subunit">
    <text evidence="1">Homodimer. Part of the ribosomal stalk of the 50S ribosomal subunit. Forms a multimeric L10(L12)X complex, where L10 forms an elongated spine to which 2 to 4 L12 dimers bind in a sequential fashion. Binds GTP-bound translation factors.</text>
</comment>
<comment type="similarity">
    <text evidence="1">Belongs to the bacterial ribosomal protein bL12 family.</text>
</comment>
<protein>
    <recommendedName>
        <fullName evidence="1">Large ribosomal subunit protein bL12</fullName>
    </recommendedName>
    <alternativeName>
        <fullName evidence="2">50S ribosomal protein L7/L12</fullName>
    </alternativeName>
</protein>
<evidence type="ECO:0000255" key="1">
    <source>
        <dbReference type="HAMAP-Rule" id="MF_00368"/>
    </source>
</evidence>
<evidence type="ECO:0000305" key="2"/>
<dbReference type="EMBL" id="CP000090">
    <property type="protein sequence ID" value="AAZ62550.1"/>
    <property type="molecule type" value="Genomic_DNA"/>
</dbReference>
<dbReference type="SMR" id="Q46WD3"/>
<dbReference type="STRING" id="264198.Reut_A3190"/>
<dbReference type="KEGG" id="reu:Reut_A3190"/>
<dbReference type="eggNOG" id="COG0222">
    <property type="taxonomic scope" value="Bacteria"/>
</dbReference>
<dbReference type="HOGENOM" id="CLU_086499_3_2_4"/>
<dbReference type="OrthoDB" id="9811748at2"/>
<dbReference type="GO" id="GO:0022625">
    <property type="term" value="C:cytosolic large ribosomal subunit"/>
    <property type="evidence" value="ECO:0007669"/>
    <property type="project" value="TreeGrafter"/>
</dbReference>
<dbReference type="GO" id="GO:0003729">
    <property type="term" value="F:mRNA binding"/>
    <property type="evidence" value="ECO:0007669"/>
    <property type="project" value="TreeGrafter"/>
</dbReference>
<dbReference type="GO" id="GO:0003735">
    <property type="term" value="F:structural constituent of ribosome"/>
    <property type="evidence" value="ECO:0007669"/>
    <property type="project" value="InterPro"/>
</dbReference>
<dbReference type="GO" id="GO:0006412">
    <property type="term" value="P:translation"/>
    <property type="evidence" value="ECO:0007669"/>
    <property type="project" value="UniProtKB-UniRule"/>
</dbReference>
<dbReference type="CDD" id="cd00387">
    <property type="entry name" value="Ribosomal_L7_L12"/>
    <property type="match status" value="1"/>
</dbReference>
<dbReference type="FunFam" id="3.30.1390.10:FF:000001">
    <property type="entry name" value="50S ribosomal protein L7/L12"/>
    <property type="match status" value="1"/>
</dbReference>
<dbReference type="Gene3D" id="3.30.1390.10">
    <property type="match status" value="1"/>
</dbReference>
<dbReference type="Gene3D" id="1.20.5.710">
    <property type="entry name" value="Single helix bin"/>
    <property type="match status" value="1"/>
</dbReference>
<dbReference type="HAMAP" id="MF_00368">
    <property type="entry name" value="Ribosomal_bL12"/>
    <property type="match status" value="1"/>
</dbReference>
<dbReference type="InterPro" id="IPR000206">
    <property type="entry name" value="Ribosomal_bL12"/>
</dbReference>
<dbReference type="InterPro" id="IPR013823">
    <property type="entry name" value="Ribosomal_bL12_C"/>
</dbReference>
<dbReference type="InterPro" id="IPR014719">
    <property type="entry name" value="Ribosomal_bL12_C/ClpS-like"/>
</dbReference>
<dbReference type="InterPro" id="IPR008932">
    <property type="entry name" value="Ribosomal_bL12_oligo"/>
</dbReference>
<dbReference type="InterPro" id="IPR036235">
    <property type="entry name" value="Ribosomal_bL12_oligo_N_sf"/>
</dbReference>
<dbReference type="NCBIfam" id="TIGR00855">
    <property type="entry name" value="L12"/>
    <property type="match status" value="1"/>
</dbReference>
<dbReference type="PANTHER" id="PTHR45987">
    <property type="entry name" value="39S RIBOSOMAL PROTEIN L12"/>
    <property type="match status" value="1"/>
</dbReference>
<dbReference type="PANTHER" id="PTHR45987:SF4">
    <property type="entry name" value="LARGE RIBOSOMAL SUBUNIT PROTEIN BL12M"/>
    <property type="match status" value="1"/>
</dbReference>
<dbReference type="Pfam" id="PF00542">
    <property type="entry name" value="Ribosomal_L12"/>
    <property type="match status" value="1"/>
</dbReference>
<dbReference type="Pfam" id="PF16320">
    <property type="entry name" value="Ribosomal_L12_N"/>
    <property type="match status" value="1"/>
</dbReference>
<dbReference type="SUPFAM" id="SSF54736">
    <property type="entry name" value="ClpS-like"/>
    <property type="match status" value="1"/>
</dbReference>
<dbReference type="SUPFAM" id="SSF48300">
    <property type="entry name" value="Ribosomal protein L7/12, oligomerisation (N-terminal) domain"/>
    <property type="match status" value="1"/>
</dbReference>
<accession>Q46WD3</accession>